<reference key="1">
    <citation type="journal article" date="2002" name="J. Biol. Chem.">
        <title>Functional conservation of subfamilies of putative UDP-N-acetylgalactosamine:polypeptide N-acetylgalactosaminyltransferases in Drosophila, Caenorhabditis elegans, and mammals. One subfamily composed of l(2)35Aa is essential in Drosophila.</title>
        <authorList>
            <person name="Schwientek T."/>
            <person name="Bennett E.P."/>
            <person name="Flores C."/>
            <person name="Thacker J."/>
            <person name="Hollmann M."/>
            <person name="Reis C.A."/>
            <person name="Behrens J."/>
            <person name="Mandel U."/>
            <person name="Keck B."/>
            <person name="Schaefer M.A."/>
            <person name="Haselmann K."/>
            <person name="Zubarev R."/>
            <person name="Roepstorff P."/>
            <person name="Burchell J.M."/>
            <person name="Taylor-Papadimitriou J."/>
            <person name="Hollingsworth M.A."/>
            <person name="Clausen H."/>
        </authorList>
    </citation>
    <scope>NUCLEOTIDE SEQUENCE [MRNA]</scope>
</reference>
<reference key="2">
    <citation type="journal article" date="2000" name="Science">
        <title>The genome sequence of Drosophila melanogaster.</title>
        <authorList>
            <person name="Adams M.D."/>
            <person name="Celniker S.E."/>
            <person name="Holt R.A."/>
            <person name="Evans C.A."/>
            <person name="Gocayne J.D."/>
            <person name="Amanatides P.G."/>
            <person name="Scherer S.E."/>
            <person name="Li P.W."/>
            <person name="Hoskins R.A."/>
            <person name="Galle R.F."/>
            <person name="George R.A."/>
            <person name="Lewis S.E."/>
            <person name="Richards S."/>
            <person name="Ashburner M."/>
            <person name="Henderson S.N."/>
            <person name="Sutton G.G."/>
            <person name="Wortman J.R."/>
            <person name="Yandell M.D."/>
            <person name="Zhang Q."/>
            <person name="Chen L.X."/>
            <person name="Brandon R.C."/>
            <person name="Rogers Y.-H.C."/>
            <person name="Blazej R.G."/>
            <person name="Champe M."/>
            <person name="Pfeiffer B.D."/>
            <person name="Wan K.H."/>
            <person name="Doyle C."/>
            <person name="Baxter E.G."/>
            <person name="Helt G."/>
            <person name="Nelson C.R."/>
            <person name="Miklos G.L.G."/>
            <person name="Abril J.F."/>
            <person name="Agbayani A."/>
            <person name="An H.-J."/>
            <person name="Andrews-Pfannkoch C."/>
            <person name="Baldwin D."/>
            <person name="Ballew R.M."/>
            <person name="Basu A."/>
            <person name="Baxendale J."/>
            <person name="Bayraktaroglu L."/>
            <person name="Beasley E.M."/>
            <person name="Beeson K.Y."/>
            <person name="Benos P.V."/>
            <person name="Berman B.P."/>
            <person name="Bhandari D."/>
            <person name="Bolshakov S."/>
            <person name="Borkova D."/>
            <person name="Botchan M.R."/>
            <person name="Bouck J."/>
            <person name="Brokstein P."/>
            <person name="Brottier P."/>
            <person name="Burtis K.C."/>
            <person name="Busam D.A."/>
            <person name="Butler H."/>
            <person name="Cadieu E."/>
            <person name="Center A."/>
            <person name="Chandra I."/>
            <person name="Cherry J.M."/>
            <person name="Cawley S."/>
            <person name="Dahlke C."/>
            <person name="Davenport L.B."/>
            <person name="Davies P."/>
            <person name="de Pablos B."/>
            <person name="Delcher A."/>
            <person name="Deng Z."/>
            <person name="Mays A.D."/>
            <person name="Dew I."/>
            <person name="Dietz S.M."/>
            <person name="Dodson K."/>
            <person name="Doup L.E."/>
            <person name="Downes M."/>
            <person name="Dugan-Rocha S."/>
            <person name="Dunkov B.C."/>
            <person name="Dunn P."/>
            <person name="Durbin K.J."/>
            <person name="Evangelista C.C."/>
            <person name="Ferraz C."/>
            <person name="Ferriera S."/>
            <person name="Fleischmann W."/>
            <person name="Fosler C."/>
            <person name="Gabrielian A.E."/>
            <person name="Garg N.S."/>
            <person name="Gelbart W.M."/>
            <person name="Glasser K."/>
            <person name="Glodek A."/>
            <person name="Gong F."/>
            <person name="Gorrell J.H."/>
            <person name="Gu Z."/>
            <person name="Guan P."/>
            <person name="Harris M."/>
            <person name="Harris N.L."/>
            <person name="Harvey D.A."/>
            <person name="Heiman T.J."/>
            <person name="Hernandez J.R."/>
            <person name="Houck J."/>
            <person name="Hostin D."/>
            <person name="Houston K.A."/>
            <person name="Howland T.J."/>
            <person name="Wei M.-H."/>
            <person name="Ibegwam C."/>
            <person name="Jalali M."/>
            <person name="Kalush F."/>
            <person name="Karpen G.H."/>
            <person name="Ke Z."/>
            <person name="Kennison J.A."/>
            <person name="Ketchum K.A."/>
            <person name="Kimmel B.E."/>
            <person name="Kodira C.D."/>
            <person name="Kraft C.L."/>
            <person name="Kravitz S."/>
            <person name="Kulp D."/>
            <person name="Lai Z."/>
            <person name="Lasko P."/>
            <person name="Lei Y."/>
            <person name="Levitsky A.A."/>
            <person name="Li J.H."/>
            <person name="Li Z."/>
            <person name="Liang Y."/>
            <person name="Lin X."/>
            <person name="Liu X."/>
            <person name="Mattei B."/>
            <person name="McIntosh T.C."/>
            <person name="McLeod M.P."/>
            <person name="McPherson D."/>
            <person name="Merkulov G."/>
            <person name="Milshina N.V."/>
            <person name="Mobarry C."/>
            <person name="Morris J."/>
            <person name="Moshrefi A."/>
            <person name="Mount S.M."/>
            <person name="Moy M."/>
            <person name="Murphy B."/>
            <person name="Murphy L."/>
            <person name="Muzny D.M."/>
            <person name="Nelson D.L."/>
            <person name="Nelson D.R."/>
            <person name="Nelson K.A."/>
            <person name="Nixon K."/>
            <person name="Nusskern D.R."/>
            <person name="Pacleb J.M."/>
            <person name="Palazzolo M."/>
            <person name="Pittman G.S."/>
            <person name="Pan S."/>
            <person name="Pollard J."/>
            <person name="Puri V."/>
            <person name="Reese M.G."/>
            <person name="Reinert K."/>
            <person name="Remington K."/>
            <person name="Saunders R.D.C."/>
            <person name="Scheeler F."/>
            <person name="Shen H."/>
            <person name="Shue B.C."/>
            <person name="Siden-Kiamos I."/>
            <person name="Simpson M."/>
            <person name="Skupski M.P."/>
            <person name="Smith T.J."/>
            <person name="Spier E."/>
            <person name="Spradling A.C."/>
            <person name="Stapleton M."/>
            <person name="Strong R."/>
            <person name="Sun E."/>
            <person name="Svirskas R."/>
            <person name="Tector C."/>
            <person name="Turner R."/>
            <person name="Venter E."/>
            <person name="Wang A.H."/>
            <person name="Wang X."/>
            <person name="Wang Z.-Y."/>
            <person name="Wassarman D.A."/>
            <person name="Weinstock G.M."/>
            <person name="Weissenbach J."/>
            <person name="Williams S.M."/>
            <person name="Woodage T."/>
            <person name="Worley K.C."/>
            <person name="Wu D."/>
            <person name="Yang S."/>
            <person name="Yao Q.A."/>
            <person name="Ye J."/>
            <person name="Yeh R.-F."/>
            <person name="Zaveri J.S."/>
            <person name="Zhan M."/>
            <person name="Zhang G."/>
            <person name="Zhao Q."/>
            <person name="Zheng L."/>
            <person name="Zheng X.H."/>
            <person name="Zhong F.N."/>
            <person name="Zhong W."/>
            <person name="Zhou X."/>
            <person name="Zhu S.C."/>
            <person name="Zhu X."/>
            <person name="Smith H.O."/>
            <person name="Gibbs R.A."/>
            <person name="Myers E.W."/>
            <person name="Rubin G.M."/>
            <person name="Venter J.C."/>
        </authorList>
    </citation>
    <scope>NUCLEOTIDE SEQUENCE [LARGE SCALE GENOMIC DNA]</scope>
    <source>
        <strain>Berkeley</strain>
    </source>
</reference>
<reference key="3">
    <citation type="journal article" date="2002" name="Genome Biol.">
        <title>Annotation of the Drosophila melanogaster euchromatic genome: a systematic review.</title>
        <authorList>
            <person name="Misra S."/>
            <person name="Crosby M.A."/>
            <person name="Mungall C.J."/>
            <person name="Matthews B.B."/>
            <person name="Campbell K.S."/>
            <person name="Hradecky P."/>
            <person name="Huang Y."/>
            <person name="Kaminker J.S."/>
            <person name="Millburn G.H."/>
            <person name="Prochnik S.E."/>
            <person name="Smith C.D."/>
            <person name="Tupy J.L."/>
            <person name="Whitfield E.J."/>
            <person name="Bayraktaroglu L."/>
            <person name="Berman B.P."/>
            <person name="Bettencourt B.R."/>
            <person name="Celniker S.E."/>
            <person name="de Grey A.D.N.J."/>
            <person name="Drysdale R.A."/>
            <person name="Harris N.L."/>
            <person name="Richter J."/>
            <person name="Russo S."/>
            <person name="Schroeder A.J."/>
            <person name="Shu S.Q."/>
            <person name="Stapleton M."/>
            <person name="Yamada C."/>
            <person name="Ashburner M."/>
            <person name="Gelbart W.M."/>
            <person name="Rubin G.M."/>
            <person name="Lewis S.E."/>
        </authorList>
    </citation>
    <scope>GENOME REANNOTATION</scope>
    <source>
        <strain>Berkeley</strain>
    </source>
</reference>
<accession>Q8IA44</accession>
<accession>Q9VUT4</accession>
<feature type="chain" id="PRO_0000059166" description="Putative inactive polypeptide N-acetylgalactosaminyltransferase 12">
    <location>
        <begin position="1"/>
        <end position="563"/>
    </location>
</feature>
<feature type="topological domain" description="Cytoplasmic" evidence="2">
    <location>
        <begin position="1"/>
        <end position="6"/>
    </location>
</feature>
<feature type="transmembrane region" description="Helical; Signal-anchor for type II membrane protein" evidence="2">
    <location>
        <begin position="7"/>
        <end position="29"/>
    </location>
</feature>
<feature type="topological domain" description="Lumenal" evidence="2">
    <location>
        <begin position="30"/>
        <end position="563"/>
    </location>
</feature>
<feature type="domain" description="Ricin B-type lectin" evidence="3">
    <location>
        <begin position="433"/>
        <end position="549"/>
    </location>
</feature>
<feature type="region of interest" description="Catalytic subdomain A">
    <location>
        <begin position="109"/>
        <end position="225"/>
    </location>
</feature>
<feature type="region of interest" description="Catalytic subdomain B">
    <location>
        <begin position="280"/>
        <end position="342"/>
    </location>
</feature>
<feature type="glycosylation site" description="N-linked (GlcNAc...) asparagine" evidence="2">
    <location>
        <position position="50"/>
    </location>
</feature>
<feature type="glycosylation site" description="N-linked (GlcNAc...) asparagine" evidence="2">
    <location>
        <position position="389"/>
    </location>
</feature>
<feature type="glycosylation site" description="N-linked (GlcNAc...) asparagine" evidence="2">
    <location>
        <position position="428"/>
    </location>
</feature>
<feature type="glycosylation site" description="N-linked (GlcNAc...) asparagine" evidence="2">
    <location>
        <position position="464"/>
    </location>
</feature>
<feature type="glycosylation site" description="N-linked (GlcNAc...) asparagine" evidence="2">
    <location>
        <position position="469"/>
    </location>
</feature>
<feature type="glycosylation site" description="N-linked (GlcNAc...) asparagine" evidence="2">
    <location>
        <position position="552"/>
    </location>
</feature>
<feature type="disulfide bond" evidence="3">
    <location>
        <begin position="97"/>
        <end position="334"/>
    </location>
</feature>
<feature type="disulfide bond" evidence="3">
    <location>
        <begin position="446"/>
        <end position="461"/>
    </location>
</feature>
<feature type="disulfide bond" evidence="3">
    <location>
        <begin position="485"/>
        <end position="499"/>
    </location>
</feature>
<feature type="disulfide bond" evidence="3">
    <location>
        <begin position="523"/>
        <end position="537"/>
    </location>
</feature>
<name>GLT12_DROME</name>
<gene>
    <name type="primary">pgant12</name>
    <name type="ORF">CG7304</name>
</gene>
<protein>
    <recommendedName>
        <fullName>Putative inactive polypeptide N-acetylgalactosaminyltransferase 12</fullName>
        <shortName>pp-GaNTase 12</shortName>
    </recommendedName>
    <alternativeName>
        <fullName>Inactive UDP-GalNAc:polypeptide N-acetylgalactosaminyltransferase 12</fullName>
    </alternativeName>
    <alternativeName>
        <fullName>Inactive protein-UDP acetylgalactosaminyltransferase 12</fullName>
    </alternativeName>
</protein>
<keyword id="KW-1015">Disulfide bond</keyword>
<keyword id="KW-0325">Glycoprotein</keyword>
<keyword id="KW-0333">Golgi apparatus</keyword>
<keyword id="KW-0430">Lectin</keyword>
<keyword id="KW-0472">Membrane</keyword>
<keyword id="KW-1185">Reference proteome</keyword>
<keyword id="KW-0735">Signal-anchor</keyword>
<keyword id="KW-0812">Transmembrane</keyword>
<keyword id="KW-1133">Transmembrane helix</keyword>
<evidence type="ECO:0000250" key="1"/>
<evidence type="ECO:0000255" key="2"/>
<evidence type="ECO:0000255" key="3">
    <source>
        <dbReference type="PROSITE-ProRule" id="PRU00174"/>
    </source>
</evidence>
<evidence type="ECO:0000305" key="4"/>
<comment type="function">
    <text evidence="4">Probable inactive glycosyltransferase.</text>
</comment>
<comment type="subcellular location">
    <subcellularLocation>
        <location evidence="1">Golgi apparatus membrane</location>
        <topology evidence="1">Single-pass type II membrane protein</topology>
    </subcellularLocation>
</comment>
<comment type="domain">
    <text evidence="1">There are two conserved domains in the glycosyltransferase region: the N-terminal domain (domain A, also called GT1 motif), which is probably involved in manganese coordination and substrate binding and the C-terminal domain (domain B, also called Gal/GalNAc-T motif), which is probably involved in catalytic reaction and UDP-Gal binding.</text>
</comment>
<comment type="domain">
    <text evidence="1">The ricin B-type lectin domain binds to GalNAc and contributes to the glycopeptide specificity.</text>
</comment>
<comment type="similarity">
    <text evidence="4">Belongs to the glycosyltransferase 2 family. GalNAc-T subfamily.</text>
</comment>
<comment type="caution">
    <text evidence="4">Although strongly related to polypeptide N-acetylgalactosaminyltransferase proteins, it lacks the conserved His at position 211 which is part of the Asp-Xaa-His motif which binds the cofactor Mn(2+). This suggests that it may have lost its activity.</text>
</comment>
<proteinExistence type="evidence at transcript level"/>
<sequence length="563" mass="65108">MEVFASVLNCCFKYIVLPVWIFIVLLLLHRDLSSWDGLMGPLSHPGLGENGSASYLSVPSWEIDEYTQGWRYYLYNSWLAERIPLRRSLPDLRDHRCQKLEYDEDSDEMKPASIIMIFRNEQLVVLLRTLHSLVERTPKYLYIELILVNDHSDTDFWNDKLSLIFFDNYVHRYIHPKARILHLPEQVGLIKARNLAASEAKAENLVFVDAQVEFTNGWLSPLLDTIAEQSYTLATPILDNLDEQTLAYQRSIERRGMYDWSLTRREVPLSRARRSHLPWPYEVAAVRTSVFAIPAVWFQDISNFDNNLRGFGAAELELSFKVWCTGGRIVQVPCSRVGHLQPKDEDYLKRYGDLHKMGEQKSRNLKRIIEVWTGDLKSAIYKYQPHLLNISEGDLNEPRKLYKQNECQSFKEFINDITPGLNHVAALNRTDYASGHVKTLEFPKKCLTINAKSQNLFLERCSTNNTLQNWTLTYVKDLRVAGNICAEVRPNLRLGYSFCHSLGGRQSWHYDSVSNQLMSNTKCLEFTDELNIFLAICDAANGKQRWILDNINLSVMQSANILV</sequence>
<dbReference type="EMBL" id="AF324750">
    <property type="protein sequence ID" value="AAN75749.1"/>
    <property type="molecule type" value="mRNA"/>
</dbReference>
<dbReference type="EMBL" id="AE014296">
    <property type="protein sequence ID" value="AAS64999.1"/>
    <property type="molecule type" value="Genomic_DNA"/>
</dbReference>
<dbReference type="RefSeq" id="NP_996098.1">
    <property type="nucleotide sequence ID" value="NM_206376.1"/>
</dbReference>
<dbReference type="SMR" id="Q8IA44"/>
<dbReference type="FunCoup" id="Q8IA44">
    <property type="interactions" value="37"/>
</dbReference>
<dbReference type="IntAct" id="Q8IA44">
    <property type="interactions" value="1"/>
</dbReference>
<dbReference type="STRING" id="7227.FBpp0075330"/>
<dbReference type="CAZy" id="CBM13">
    <property type="family name" value="Carbohydrate-Binding Module Family 13"/>
</dbReference>
<dbReference type="CAZy" id="GT27">
    <property type="family name" value="Glycosyltransferase Family 27"/>
</dbReference>
<dbReference type="GlyCosmos" id="Q8IA44">
    <property type="glycosylation" value="6 sites, No reported glycans"/>
</dbReference>
<dbReference type="GlyGen" id="Q8IA44">
    <property type="glycosylation" value="6 sites"/>
</dbReference>
<dbReference type="PaxDb" id="7227-FBpp0075330"/>
<dbReference type="EnsemblMetazoa" id="FBtr0075577">
    <property type="protein sequence ID" value="FBpp0075330"/>
    <property type="gene ID" value="FBgn0036527"/>
</dbReference>
<dbReference type="GeneID" id="39713"/>
<dbReference type="KEGG" id="dme:Dmel_CG7304"/>
<dbReference type="UCSC" id="CG7304-RA">
    <property type="organism name" value="d. melanogaster"/>
</dbReference>
<dbReference type="AGR" id="FB:FBgn0036527"/>
<dbReference type="FlyBase" id="FBgn0036527">
    <property type="gene designation" value="CG7304"/>
</dbReference>
<dbReference type="VEuPathDB" id="VectorBase:FBgn0036527"/>
<dbReference type="eggNOG" id="KOG3736">
    <property type="taxonomic scope" value="Eukaryota"/>
</dbReference>
<dbReference type="GeneTree" id="ENSGT00940000166027"/>
<dbReference type="HOGENOM" id="CLU_013477_0_1_1"/>
<dbReference type="InParanoid" id="Q8IA44"/>
<dbReference type="OMA" id="CLTINAK"/>
<dbReference type="OrthoDB" id="7857914at2759"/>
<dbReference type="PhylomeDB" id="Q8IA44"/>
<dbReference type="Reactome" id="R-DME-913709">
    <property type="pathway name" value="O-linked glycosylation of mucins"/>
</dbReference>
<dbReference type="SignaLink" id="Q8IA44"/>
<dbReference type="BioGRID-ORCS" id="39713">
    <property type="hits" value="0 hits in 3 CRISPR screens"/>
</dbReference>
<dbReference type="GenomeRNAi" id="39713"/>
<dbReference type="PRO" id="PR:Q8IA44"/>
<dbReference type="Proteomes" id="UP000000803">
    <property type="component" value="Chromosome 3L"/>
</dbReference>
<dbReference type="Bgee" id="FBgn0036527">
    <property type="expression patterns" value="Expressed in male accessory gland main cell (Drosophila) in male reproductive gland and 10 other cell types or tissues"/>
</dbReference>
<dbReference type="GO" id="GO:0005794">
    <property type="term" value="C:Golgi apparatus"/>
    <property type="evidence" value="ECO:0000318"/>
    <property type="project" value="GO_Central"/>
</dbReference>
<dbReference type="GO" id="GO:0000139">
    <property type="term" value="C:Golgi membrane"/>
    <property type="evidence" value="ECO:0007669"/>
    <property type="project" value="UniProtKB-SubCell"/>
</dbReference>
<dbReference type="GO" id="GO:0030246">
    <property type="term" value="F:carbohydrate binding"/>
    <property type="evidence" value="ECO:0007669"/>
    <property type="project" value="UniProtKB-KW"/>
</dbReference>
<dbReference type="GO" id="GO:0006493">
    <property type="term" value="P:protein O-linked glycosylation"/>
    <property type="evidence" value="ECO:0000250"/>
    <property type="project" value="UniProtKB"/>
</dbReference>
<dbReference type="GO" id="GO:0019953">
    <property type="term" value="P:sexual reproduction"/>
    <property type="evidence" value="ECO:0000270"/>
    <property type="project" value="FlyBase"/>
</dbReference>
<dbReference type="CDD" id="cd23461">
    <property type="entry name" value="beta-trefoil_Ricin_Pgant8-like"/>
    <property type="match status" value="1"/>
</dbReference>
<dbReference type="CDD" id="cd02510">
    <property type="entry name" value="pp-GalNAc-T"/>
    <property type="match status" value="1"/>
</dbReference>
<dbReference type="Gene3D" id="2.80.10.50">
    <property type="match status" value="1"/>
</dbReference>
<dbReference type="Gene3D" id="3.90.550.10">
    <property type="entry name" value="Spore Coat Polysaccharide Biosynthesis Protein SpsA, Chain A"/>
    <property type="match status" value="1"/>
</dbReference>
<dbReference type="InterPro" id="IPR045885">
    <property type="entry name" value="GalNAc-T"/>
</dbReference>
<dbReference type="InterPro" id="IPR001173">
    <property type="entry name" value="Glyco_trans_2-like"/>
</dbReference>
<dbReference type="InterPro" id="IPR029044">
    <property type="entry name" value="Nucleotide-diphossugar_trans"/>
</dbReference>
<dbReference type="InterPro" id="IPR035992">
    <property type="entry name" value="Ricin_B-like_lectins"/>
</dbReference>
<dbReference type="InterPro" id="IPR000772">
    <property type="entry name" value="Ricin_B_lectin"/>
</dbReference>
<dbReference type="PANTHER" id="PTHR11675">
    <property type="entry name" value="N-ACETYLGALACTOSAMINYLTRANSFERASE"/>
    <property type="match status" value="1"/>
</dbReference>
<dbReference type="PANTHER" id="PTHR11675:SF134">
    <property type="entry name" value="N-ACETYLGALACTOSAMINYLTRANSFERASE 4-RELATED"/>
    <property type="match status" value="1"/>
</dbReference>
<dbReference type="Pfam" id="PF00535">
    <property type="entry name" value="Glycos_transf_2"/>
    <property type="match status" value="1"/>
</dbReference>
<dbReference type="Pfam" id="PF00652">
    <property type="entry name" value="Ricin_B_lectin"/>
    <property type="match status" value="1"/>
</dbReference>
<dbReference type="SMART" id="SM00458">
    <property type="entry name" value="RICIN"/>
    <property type="match status" value="1"/>
</dbReference>
<dbReference type="SUPFAM" id="SSF53448">
    <property type="entry name" value="Nucleotide-diphospho-sugar transferases"/>
    <property type="match status" value="1"/>
</dbReference>
<dbReference type="SUPFAM" id="SSF50370">
    <property type="entry name" value="Ricin B-like lectins"/>
    <property type="match status" value="1"/>
</dbReference>
<dbReference type="PROSITE" id="PS50231">
    <property type="entry name" value="RICIN_B_LECTIN"/>
    <property type="match status" value="1"/>
</dbReference>
<organism>
    <name type="scientific">Drosophila melanogaster</name>
    <name type="common">Fruit fly</name>
    <dbReference type="NCBI Taxonomy" id="7227"/>
    <lineage>
        <taxon>Eukaryota</taxon>
        <taxon>Metazoa</taxon>
        <taxon>Ecdysozoa</taxon>
        <taxon>Arthropoda</taxon>
        <taxon>Hexapoda</taxon>
        <taxon>Insecta</taxon>
        <taxon>Pterygota</taxon>
        <taxon>Neoptera</taxon>
        <taxon>Endopterygota</taxon>
        <taxon>Diptera</taxon>
        <taxon>Brachycera</taxon>
        <taxon>Muscomorpha</taxon>
        <taxon>Ephydroidea</taxon>
        <taxon>Drosophilidae</taxon>
        <taxon>Drosophila</taxon>
        <taxon>Sophophora</taxon>
    </lineage>
</organism>